<gene>
    <name type="ordered locus">SAUSA300_0419</name>
</gene>
<evidence type="ECO:0000255" key="1">
    <source>
        <dbReference type="PROSITE-ProRule" id="PRU00303"/>
    </source>
</evidence>
<evidence type="ECO:0000305" key="2"/>
<comment type="subcellular location">
    <subcellularLocation>
        <location evidence="1">Cell membrane</location>
        <topology evidence="1">Lipid-anchor</topology>
    </subcellularLocation>
</comment>
<comment type="similarity">
    <text evidence="2">Belongs to the staphylococcal tandem lipoprotein family.</text>
</comment>
<dbReference type="EMBL" id="CP000255">
    <property type="protein sequence ID" value="ABD20503.1"/>
    <property type="molecule type" value="Genomic_DNA"/>
</dbReference>
<dbReference type="SMR" id="Q2FJJ6"/>
<dbReference type="KEGG" id="saa:SAUSA300_0419"/>
<dbReference type="HOGENOM" id="CLU_071589_0_1_9"/>
<dbReference type="OMA" id="REMMGNI"/>
<dbReference type="Proteomes" id="UP000001939">
    <property type="component" value="Chromosome"/>
</dbReference>
<dbReference type="GO" id="GO:0005886">
    <property type="term" value="C:plasma membrane"/>
    <property type="evidence" value="ECO:0007669"/>
    <property type="project" value="UniProtKB-SubCell"/>
</dbReference>
<dbReference type="Gene3D" id="2.50.20.40">
    <property type="match status" value="1"/>
</dbReference>
<dbReference type="InterPro" id="IPR007595">
    <property type="entry name" value="Csa"/>
</dbReference>
<dbReference type="InterPro" id="IPR038641">
    <property type="entry name" value="Csa_sf"/>
</dbReference>
<dbReference type="NCBIfam" id="TIGR01742">
    <property type="entry name" value="SA_tandem_lipo"/>
    <property type="match status" value="1"/>
</dbReference>
<dbReference type="Pfam" id="PF04507">
    <property type="entry name" value="DUF576"/>
    <property type="match status" value="1"/>
</dbReference>
<dbReference type="PROSITE" id="PS51257">
    <property type="entry name" value="PROKAR_LIPOPROTEIN"/>
    <property type="match status" value="1"/>
</dbReference>
<reference key="1">
    <citation type="journal article" date="2006" name="Lancet">
        <title>Complete genome sequence of USA300, an epidemic clone of community-acquired meticillin-resistant Staphylococcus aureus.</title>
        <authorList>
            <person name="Diep B.A."/>
            <person name="Gill S.R."/>
            <person name="Chang R.F."/>
            <person name="Phan T.H."/>
            <person name="Chen J.H."/>
            <person name="Davidson M.G."/>
            <person name="Lin F."/>
            <person name="Lin J."/>
            <person name="Carleton H.A."/>
            <person name="Mongodin E.F."/>
            <person name="Sensabaugh G.F."/>
            <person name="Perdreau-Remington F."/>
        </authorList>
    </citation>
    <scope>NUCLEOTIDE SEQUENCE [LARGE SCALE GENOMIC DNA]</scope>
    <source>
        <strain>USA300</strain>
    </source>
</reference>
<sequence length="270" mass="31438">MEYIKKIALYMSVLLLIIFIGGCGNMKDEQKKEEQTNKTDSKEEQIKKSFAKTLDMYPIKNLEDLYDKEGYRDGEFKKGDKGTWTILTGFSKSNKPGVLDDEGMVLYLNRNAKKATGYYFVNKVYDDISKNHNEKKYRVELKNNKIVLLDNVEDKKLKQKIENFKFFSQYADFKDLKNYQDGNITTNENVPSYEAQYKMNNSDKNVKKLREIYPITTNNSPNLKLYIDGDIKGSSVGYKKIEYKFSKDKGQETTLRDYLNFGPSEGENVE</sequence>
<keyword id="KW-1003">Cell membrane</keyword>
<keyword id="KW-0449">Lipoprotein</keyword>
<keyword id="KW-0472">Membrane</keyword>
<keyword id="KW-0564">Palmitate</keyword>
<keyword id="KW-0732">Signal</keyword>
<feature type="signal peptide" evidence="1">
    <location>
        <begin position="1"/>
        <end position="22"/>
    </location>
</feature>
<feature type="chain" id="PRO_0000282083" description="Uncharacterized lipoprotein SAUSA300_0419">
    <location>
        <begin position="23"/>
        <end position="270"/>
    </location>
</feature>
<feature type="lipid moiety-binding region" description="N-palmitoyl cysteine" evidence="1">
    <location>
        <position position="23"/>
    </location>
</feature>
<feature type="lipid moiety-binding region" description="S-diacylglycerol cysteine" evidence="1">
    <location>
        <position position="23"/>
    </location>
</feature>
<proteinExistence type="inferred from homology"/>
<organism>
    <name type="scientific">Staphylococcus aureus (strain USA300)</name>
    <dbReference type="NCBI Taxonomy" id="367830"/>
    <lineage>
        <taxon>Bacteria</taxon>
        <taxon>Bacillati</taxon>
        <taxon>Bacillota</taxon>
        <taxon>Bacilli</taxon>
        <taxon>Bacillales</taxon>
        <taxon>Staphylococcaceae</taxon>
        <taxon>Staphylococcus</taxon>
    </lineage>
</organism>
<protein>
    <recommendedName>
        <fullName>Uncharacterized lipoprotein SAUSA300_0419</fullName>
    </recommendedName>
</protein>
<name>Y419_STAA3</name>
<accession>Q2FJJ6</accession>